<comment type="tissue specificity">
    <text evidence="3">Ubiquitous.</text>
</comment>
<comment type="similarity">
    <text evidence="4">Belongs to the MEG family.</text>
</comment>
<comment type="caution">
    <text evidence="4">May be the product of a chimeric cDNA as it seems that the 3'end map to chromosome 4 and the 5'end to chromosome 7.</text>
</comment>
<gene>
    <name type="primary">MEG5</name>
</gene>
<proteinExistence type="evidence at transcript level"/>
<accession>Q6JB11</accession>
<protein>
    <recommendedName>
        <fullName>Protein MATERNALLY EXPRESSED GENE 5</fullName>
    </recommendedName>
</protein>
<dbReference type="EMBL" id="AY536125">
    <property type="protein sequence ID" value="AAT09814.1"/>
    <property type="molecule type" value="mRNA"/>
</dbReference>
<dbReference type="SMR" id="Q6JB11"/>
<dbReference type="FunCoup" id="Q6JB11">
    <property type="interactions" value="84"/>
</dbReference>
<dbReference type="STRING" id="4577.Q6JB11"/>
<dbReference type="PaxDb" id="4577-GRMZM5G837626_P01"/>
<dbReference type="eggNOG" id="ENOG502QVUV">
    <property type="taxonomic scope" value="Eukaryota"/>
</dbReference>
<dbReference type="InParanoid" id="Q6JB11"/>
<dbReference type="Proteomes" id="UP000007305">
    <property type="component" value="Unplaced"/>
</dbReference>
<dbReference type="ExpressionAtlas" id="Q6JB11">
    <property type="expression patterns" value="baseline and differential"/>
</dbReference>
<dbReference type="GO" id="GO:0003729">
    <property type="term" value="F:mRNA binding"/>
    <property type="evidence" value="ECO:0000318"/>
    <property type="project" value="GO_Central"/>
</dbReference>
<dbReference type="CDD" id="cd21618">
    <property type="entry name" value="RRM_AtNSRA_like"/>
    <property type="match status" value="1"/>
</dbReference>
<dbReference type="Gene3D" id="3.30.70.330">
    <property type="match status" value="1"/>
</dbReference>
<dbReference type="InterPro" id="IPR056205">
    <property type="entry name" value="Meg"/>
</dbReference>
<dbReference type="InterPro" id="IPR012677">
    <property type="entry name" value="Nucleotide-bd_a/b_plait_sf"/>
</dbReference>
<dbReference type="InterPro" id="IPR035979">
    <property type="entry name" value="RBD_domain_sf"/>
</dbReference>
<dbReference type="InterPro" id="IPR000504">
    <property type="entry name" value="RRM_dom"/>
</dbReference>
<dbReference type="PANTHER" id="PTHR10501">
    <property type="entry name" value="U1 SMALL NUCLEAR RIBONUCLEOPROTEIN A/U2 SMALL NUCLEAR RIBONUCLEOPROTEIN B"/>
    <property type="match status" value="1"/>
</dbReference>
<dbReference type="Pfam" id="PF24153">
    <property type="entry name" value="Meg"/>
    <property type="match status" value="1"/>
</dbReference>
<dbReference type="Pfam" id="PF00076">
    <property type="entry name" value="RRM_1"/>
    <property type="match status" value="1"/>
</dbReference>
<dbReference type="SMART" id="SM00360">
    <property type="entry name" value="RRM"/>
    <property type="match status" value="1"/>
</dbReference>
<dbReference type="SUPFAM" id="SSF54928">
    <property type="entry name" value="RNA-binding domain, RBD"/>
    <property type="match status" value="1"/>
</dbReference>
<dbReference type="PROSITE" id="PS50102">
    <property type="entry name" value="RRM"/>
    <property type="match status" value="1"/>
</dbReference>
<feature type="chain" id="PRO_0000430077" description="Protein MATERNALLY EXPRESSED GENE 5">
    <location>
        <begin position="1"/>
        <end position="163"/>
    </location>
</feature>
<feature type="domain" description="RRM" evidence="2">
    <location>
        <begin position="38"/>
        <end position="117"/>
    </location>
</feature>
<feature type="disulfide bond" evidence="1">
    <location>
        <begin position="140"/>
        <end position="162"/>
    </location>
</feature>
<feature type="disulfide bond" evidence="1">
    <location>
        <begin position="143"/>
        <end position="151"/>
    </location>
</feature>
<sequence>MAGYGVDGQRMMGVVGMDSRGMGYGGRPEPPLPPDASSTLYIEGLPANCTRREVSHIFRPFVGFREVRLVNKESRHPGGDPHVLCFVDFDNPAQATIALEALQGHVTDDVNVSAPAEEGILREKRAQCAQGFLPCKDNKCYCCIGGRTHDCYYTMAQCSHACF</sequence>
<organism>
    <name type="scientific">Zea mays</name>
    <name type="common">Maize</name>
    <dbReference type="NCBI Taxonomy" id="4577"/>
    <lineage>
        <taxon>Eukaryota</taxon>
        <taxon>Viridiplantae</taxon>
        <taxon>Streptophyta</taxon>
        <taxon>Embryophyta</taxon>
        <taxon>Tracheophyta</taxon>
        <taxon>Spermatophyta</taxon>
        <taxon>Magnoliopsida</taxon>
        <taxon>Liliopsida</taxon>
        <taxon>Poales</taxon>
        <taxon>Poaceae</taxon>
        <taxon>PACMAD clade</taxon>
        <taxon>Panicoideae</taxon>
        <taxon>Andropogonodae</taxon>
        <taxon>Andropogoneae</taxon>
        <taxon>Tripsacinae</taxon>
        <taxon>Zea</taxon>
    </lineage>
</organism>
<keyword id="KW-1015">Disulfide bond</keyword>
<keyword id="KW-1185">Reference proteome</keyword>
<keyword id="KW-0694">RNA-binding</keyword>
<reference key="1">
    <citation type="journal article" date="2004" name="Plant Cell">
        <title>maternally expressed gene1 is a novel maize endosperm transfer cell-specific gene with a maternal parent-of-origin pattern of expression.</title>
        <authorList>
            <person name="Gutierrez-Marcos J.F."/>
            <person name="Costa L.M."/>
            <person name="Biderre-Petit C."/>
            <person name="Khbaya B."/>
            <person name="O'Sullivan D.M."/>
            <person name="Wormald M."/>
            <person name="Perez P."/>
            <person name="Dickinson H.G."/>
        </authorList>
    </citation>
    <scope>NUCLEOTIDE SEQUENCE [MRNA]</scope>
    <scope>TISSUE SPECIFICITY</scope>
    <scope>GENE FAMILY</scope>
    <scope>NOMENCLATURE</scope>
</reference>
<evidence type="ECO:0000250" key="1"/>
<evidence type="ECO:0000255" key="2">
    <source>
        <dbReference type="PROSITE-ProRule" id="PRU00176"/>
    </source>
</evidence>
<evidence type="ECO:0000269" key="3">
    <source>
    </source>
</evidence>
<evidence type="ECO:0000305" key="4"/>
<name>MEG5_MAIZE</name>